<evidence type="ECO:0000250" key="1"/>
<evidence type="ECO:0000255" key="2"/>
<evidence type="ECO:0000305" key="3"/>
<proteinExistence type="evidence at protein level"/>
<sequence>MLRQCARWVLTRTRFGRGCRRYGSCSPSASGDAGEARAYFTTPIFYVNAAPHIGHLYSALLADALCRHRRLRVPGSASTRFSTGTDEHGLKIQQAAATAGLAPIELCDRVSAQFLQLFREADISSTDFIRTTEARHRVAVQHFWGVLEARGLLYKGIYEGWYCASDECFLPEAKVTRQVGPSGDPCPVSLESGHPVSWTKEENYIFKLSQFREPLQRWLGNNPQAITPEPFHQAVLQWLEEELPDLSVSRRSSHLHWGIPVPGDDSQTIYVWLDALVNYLTVVGYPDADFKSWWPATSHIIGKDILKFHAIYWPALLLGAGLRPPHRIYVHSHWTVSGQKMSKSLGNVVDPRTCLDRYTVDGFRYFLLRQGVPNWDCDYYDEKVVKLLDSELADALGGLLNRCTAYRINPSGTYPSFCAACFPSEPGLTGPSVRVQAEDYALVTAVATLPKLVAGYYNDFQIYKALEAVSSCVRQTNGFVQRHAPWKLNWESPEDAPWLGTVLHVALECLRVFGTLLQPVTPNLADKLLSRLGVSTTERGLGELYFLPRFYGHPCPFEGRKLGPDTGLLFPRLDQSRTRLVKAHRT</sequence>
<organism>
    <name type="scientific">Mus musculus</name>
    <name type="common">Mouse</name>
    <dbReference type="NCBI Taxonomy" id="10090"/>
    <lineage>
        <taxon>Eukaryota</taxon>
        <taxon>Metazoa</taxon>
        <taxon>Chordata</taxon>
        <taxon>Craniata</taxon>
        <taxon>Vertebrata</taxon>
        <taxon>Euteleostomi</taxon>
        <taxon>Mammalia</taxon>
        <taxon>Eutheria</taxon>
        <taxon>Euarchontoglires</taxon>
        <taxon>Glires</taxon>
        <taxon>Rodentia</taxon>
        <taxon>Myomorpha</taxon>
        <taxon>Muroidea</taxon>
        <taxon>Muridae</taxon>
        <taxon>Murinae</taxon>
        <taxon>Mus</taxon>
        <taxon>Mus</taxon>
    </lineage>
</organism>
<keyword id="KW-0030">Aminoacyl-tRNA synthetase</keyword>
<keyword id="KW-0067">ATP-binding</keyword>
<keyword id="KW-0436">Ligase</keyword>
<keyword id="KW-0496">Mitochondrion</keyword>
<keyword id="KW-0547">Nucleotide-binding</keyword>
<keyword id="KW-0648">Protein biosynthesis</keyword>
<keyword id="KW-1185">Reference proteome</keyword>
<keyword id="KW-0809">Transit peptide</keyword>
<name>SYMM_MOUSE</name>
<gene>
    <name type="primary">Mars2</name>
</gene>
<protein>
    <recommendedName>
        <fullName>Methionine--tRNA ligase, mitochondrial</fullName>
        <ecNumber>6.1.1.10</ecNumber>
    </recommendedName>
    <alternativeName>
        <fullName>Methionyl-tRNA synthetase 2</fullName>
    </alternativeName>
    <alternativeName>
        <fullName>Mitochondrial methionyl-tRNA synthetase</fullName>
        <shortName>MtMetRS</shortName>
    </alternativeName>
</protein>
<feature type="transit peptide" description="Mitochondrion" evidence="2">
    <location>
        <begin position="1"/>
        <end position="46"/>
    </location>
</feature>
<feature type="chain" id="PRO_0000045494" description="Methionine--tRNA ligase, mitochondrial">
    <location>
        <begin position="47"/>
        <end position="586"/>
    </location>
</feature>
<feature type="short sequence motif" description="'HIGH' region">
    <location>
        <begin position="45"/>
        <end position="55"/>
    </location>
</feature>
<feature type="short sequence motif" description="'KMSKS' region">
    <location>
        <begin position="340"/>
        <end position="344"/>
    </location>
</feature>
<feature type="binding site" evidence="1">
    <location>
        <position position="343"/>
    </location>
    <ligand>
        <name>ATP</name>
        <dbReference type="ChEBI" id="CHEBI:30616"/>
    </ligand>
</feature>
<feature type="sequence conflict" description="In Ref. 2; AAH99669." evidence="3" ref="2">
    <original>L</original>
    <variation>F</variation>
    <location>
        <position position="306"/>
    </location>
</feature>
<comment type="catalytic activity">
    <reaction>
        <text>tRNA(Met) + L-methionine + ATP = L-methionyl-tRNA(Met) + AMP + diphosphate</text>
        <dbReference type="Rhea" id="RHEA:13481"/>
        <dbReference type="Rhea" id="RHEA-COMP:9667"/>
        <dbReference type="Rhea" id="RHEA-COMP:9698"/>
        <dbReference type="ChEBI" id="CHEBI:30616"/>
        <dbReference type="ChEBI" id="CHEBI:33019"/>
        <dbReference type="ChEBI" id="CHEBI:57844"/>
        <dbReference type="ChEBI" id="CHEBI:78442"/>
        <dbReference type="ChEBI" id="CHEBI:78530"/>
        <dbReference type="ChEBI" id="CHEBI:456215"/>
        <dbReference type="EC" id="6.1.1.10"/>
    </reaction>
</comment>
<comment type="subcellular location">
    <subcellularLocation>
        <location evidence="1">Mitochondrion matrix</location>
    </subcellularLocation>
</comment>
<comment type="similarity">
    <text evidence="3">Belongs to the class-I aminoacyl-tRNA synthetase family.</text>
</comment>
<comment type="sequence caution" evidence="3">
    <conflict type="erroneous initiation">
        <sequence resource="EMBL-CDS" id="BAC31393"/>
    </conflict>
</comment>
<reference key="1">
    <citation type="journal article" date="2005" name="Science">
        <title>The transcriptional landscape of the mammalian genome.</title>
        <authorList>
            <person name="Carninci P."/>
            <person name="Kasukawa T."/>
            <person name="Katayama S."/>
            <person name="Gough J."/>
            <person name="Frith M.C."/>
            <person name="Maeda N."/>
            <person name="Oyama R."/>
            <person name="Ravasi T."/>
            <person name="Lenhard B."/>
            <person name="Wells C."/>
            <person name="Kodzius R."/>
            <person name="Shimokawa K."/>
            <person name="Bajic V.B."/>
            <person name="Brenner S.E."/>
            <person name="Batalov S."/>
            <person name="Forrest A.R."/>
            <person name="Zavolan M."/>
            <person name="Davis M.J."/>
            <person name="Wilming L.G."/>
            <person name="Aidinis V."/>
            <person name="Allen J.E."/>
            <person name="Ambesi-Impiombato A."/>
            <person name="Apweiler R."/>
            <person name="Aturaliya R.N."/>
            <person name="Bailey T.L."/>
            <person name="Bansal M."/>
            <person name="Baxter L."/>
            <person name="Beisel K.W."/>
            <person name="Bersano T."/>
            <person name="Bono H."/>
            <person name="Chalk A.M."/>
            <person name="Chiu K.P."/>
            <person name="Choudhary V."/>
            <person name="Christoffels A."/>
            <person name="Clutterbuck D.R."/>
            <person name="Crowe M.L."/>
            <person name="Dalla E."/>
            <person name="Dalrymple B.P."/>
            <person name="de Bono B."/>
            <person name="Della Gatta G."/>
            <person name="di Bernardo D."/>
            <person name="Down T."/>
            <person name="Engstrom P."/>
            <person name="Fagiolini M."/>
            <person name="Faulkner G."/>
            <person name="Fletcher C.F."/>
            <person name="Fukushima T."/>
            <person name="Furuno M."/>
            <person name="Futaki S."/>
            <person name="Gariboldi M."/>
            <person name="Georgii-Hemming P."/>
            <person name="Gingeras T.R."/>
            <person name="Gojobori T."/>
            <person name="Green R.E."/>
            <person name="Gustincich S."/>
            <person name="Harbers M."/>
            <person name="Hayashi Y."/>
            <person name="Hensch T.K."/>
            <person name="Hirokawa N."/>
            <person name="Hill D."/>
            <person name="Huminiecki L."/>
            <person name="Iacono M."/>
            <person name="Ikeo K."/>
            <person name="Iwama A."/>
            <person name="Ishikawa T."/>
            <person name="Jakt M."/>
            <person name="Kanapin A."/>
            <person name="Katoh M."/>
            <person name="Kawasawa Y."/>
            <person name="Kelso J."/>
            <person name="Kitamura H."/>
            <person name="Kitano H."/>
            <person name="Kollias G."/>
            <person name="Krishnan S.P."/>
            <person name="Kruger A."/>
            <person name="Kummerfeld S.K."/>
            <person name="Kurochkin I.V."/>
            <person name="Lareau L.F."/>
            <person name="Lazarevic D."/>
            <person name="Lipovich L."/>
            <person name="Liu J."/>
            <person name="Liuni S."/>
            <person name="McWilliam S."/>
            <person name="Madan Babu M."/>
            <person name="Madera M."/>
            <person name="Marchionni L."/>
            <person name="Matsuda H."/>
            <person name="Matsuzawa S."/>
            <person name="Miki H."/>
            <person name="Mignone F."/>
            <person name="Miyake S."/>
            <person name="Morris K."/>
            <person name="Mottagui-Tabar S."/>
            <person name="Mulder N."/>
            <person name="Nakano N."/>
            <person name="Nakauchi H."/>
            <person name="Ng P."/>
            <person name="Nilsson R."/>
            <person name="Nishiguchi S."/>
            <person name="Nishikawa S."/>
            <person name="Nori F."/>
            <person name="Ohara O."/>
            <person name="Okazaki Y."/>
            <person name="Orlando V."/>
            <person name="Pang K.C."/>
            <person name="Pavan W.J."/>
            <person name="Pavesi G."/>
            <person name="Pesole G."/>
            <person name="Petrovsky N."/>
            <person name="Piazza S."/>
            <person name="Reed J."/>
            <person name="Reid J.F."/>
            <person name="Ring B.Z."/>
            <person name="Ringwald M."/>
            <person name="Rost B."/>
            <person name="Ruan Y."/>
            <person name="Salzberg S.L."/>
            <person name="Sandelin A."/>
            <person name="Schneider C."/>
            <person name="Schoenbach C."/>
            <person name="Sekiguchi K."/>
            <person name="Semple C.A."/>
            <person name="Seno S."/>
            <person name="Sessa L."/>
            <person name="Sheng Y."/>
            <person name="Shibata Y."/>
            <person name="Shimada H."/>
            <person name="Shimada K."/>
            <person name="Silva D."/>
            <person name="Sinclair B."/>
            <person name="Sperling S."/>
            <person name="Stupka E."/>
            <person name="Sugiura K."/>
            <person name="Sultana R."/>
            <person name="Takenaka Y."/>
            <person name="Taki K."/>
            <person name="Tammoja K."/>
            <person name="Tan S.L."/>
            <person name="Tang S."/>
            <person name="Taylor M.S."/>
            <person name="Tegner J."/>
            <person name="Teichmann S.A."/>
            <person name="Ueda H.R."/>
            <person name="van Nimwegen E."/>
            <person name="Verardo R."/>
            <person name="Wei C.L."/>
            <person name="Yagi K."/>
            <person name="Yamanishi H."/>
            <person name="Zabarovsky E."/>
            <person name="Zhu S."/>
            <person name="Zimmer A."/>
            <person name="Hide W."/>
            <person name="Bult C."/>
            <person name="Grimmond S.M."/>
            <person name="Teasdale R.D."/>
            <person name="Liu E.T."/>
            <person name="Brusic V."/>
            <person name="Quackenbush J."/>
            <person name="Wahlestedt C."/>
            <person name="Mattick J.S."/>
            <person name="Hume D.A."/>
            <person name="Kai C."/>
            <person name="Sasaki D."/>
            <person name="Tomaru Y."/>
            <person name="Fukuda S."/>
            <person name="Kanamori-Katayama M."/>
            <person name="Suzuki M."/>
            <person name="Aoki J."/>
            <person name="Arakawa T."/>
            <person name="Iida J."/>
            <person name="Imamura K."/>
            <person name="Itoh M."/>
            <person name="Kato T."/>
            <person name="Kawaji H."/>
            <person name="Kawagashira N."/>
            <person name="Kawashima T."/>
            <person name="Kojima M."/>
            <person name="Kondo S."/>
            <person name="Konno H."/>
            <person name="Nakano K."/>
            <person name="Ninomiya N."/>
            <person name="Nishio T."/>
            <person name="Okada M."/>
            <person name="Plessy C."/>
            <person name="Shibata K."/>
            <person name="Shiraki T."/>
            <person name="Suzuki S."/>
            <person name="Tagami M."/>
            <person name="Waki K."/>
            <person name="Watahiki A."/>
            <person name="Okamura-Oho Y."/>
            <person name="Suzuki H."/>
            <person name="Kawai J."/>
            <person name="Hayashizaki Y."/>
        </authorList>
    </citation>
    <scope>NUCLEOTIDE SEQUENCE [LARGE SCALE MRNA]</scope>
    <source>
        <strain>C57BL/6J</strain>
        <strain>NOD</strain>
        <tissue>Cerebellum</tissue>
        <tissue>Liver</tissue>
        <tissue>Spleen</tissue>
    </source>
</reference>
<reference key="2">
    <citation type="journal article" date="2004" name="Genome Res.">
        <title>The status, quality, and expansion of the NIH full-length cDNA project: the Mammalian Gene Collection (MGC).</title>
        <authorList>
            <consortium name="The MGC Project Team"/>
        </authorList>
    </citation>
    <scope>NUCLEOTIDE SEQUENCE [LARGE SCALE MRNA]</scope>
    <source>
        <strain>FVB/N-3</strain>
        <tissue>Mammary tumor</tissue>
    </source>
</reference>
<reference key="3">
    <citation type="journal article" date="2010" name="Cell">
        <title>A tissue-specific atlas of mouse protein phosphorylation and expression.</title>
        <authorList>
            <person name="Huttlin E.L."/>
            <person name="Jedrychowski M.P."/>
            <person name="Elias J.E."/>
            <person name="Goswami T."/>
            <person name="Rad R."/>
            <person name="Beausoleil S.A."/>
            <person name="Villen J."/>
            <person name="Haas W."/>
            <person name="Sowa M.E."/>
            <person name="Gygi S.P."/>
        </authorList>
    </citation>
    <scope>IDENTIFICATION BY MASS SPECTROMETRY [LARGE SCALE ANALYSIS]</scope>
    <source>
        <tissue>Brain</tissue>
        <tissue>Brown adipose tissue</tissue>
        <tissue>Heart</tissue>
        <tissue>Kidney</tissue>
        <tissue>Spleen</tissue>
    </source>
</reference>
<dbReference type="EC" id="6.1.1.10"/>
<dbReference type="EMBL" id="AK042888">
    <property type="protein sequence ID" value="BAC31393.1"/>
    <property type="status" value="ALT_INIT"/>
    <property type="molecule type" value="mRNA"/>
</dbReference>
<dbReference type="EMBL" id="AK050196">
    <property type="protein sequence ID" value="BAC34119.1"/>
    <property type="molecule type" value="mRNA"/>
</dbReference>
<dbReference type="EMBL" id="AK172240">
    <property type="protein sequence ID" value="BAE42903.1"/>
    <property type="molecule type" value="mRNA"/>
</dbReference>
<dbReference type="EMBL" id="BC099669">
    <property type="protein sequence ID" value="AAH99669.1"/>
    <property type="molecule type" value="mRNA"/>
</dbReference>
<dbReference type="CCDS" id="CCDS14963.1"/>
<dbReference type="RefSeq" id="NP_780648.1">
    <property type="nucleotide sequence ID" value="NM_175439.3"/>
</dbReference>
<dbReference type="SMR" id="Q499X9"/>
<dbReference type="BioGRID" id="229348">
    <property type="interactions" value="1"/>
</dbReference>
<dbReference type="FunCoup" id="Q499X9">
    <property type="interactions" value="2045"/>
</dbReference>
<dbReference type="STRING" id="10090.ENSMUSP00000049770"/>
<dbReference type="iPTMnet" id="Q499X9"/>
<dbReference type="PhosphoSitePlus" id="Q499X9"/>
<dbReference type="PaxDb" id="10090-ENSMUSP00000049770"/>
<dbReference type="ProteomicsDB" id="254839"/>
<dbReference type="Pumba" id="Q499X9"/>
<dbReference type="Antibodypedia" id="50280">
    <property type="antibodies" value="117 antibodies from 23 providers"/>
</dbReference>
<dbReference type="DNASU" id="212679"/>
<dbReference type="Ensembl" id="ENSMUST00000061334.10">
    <property type="protein sequence ID" value="ENSMUSP00000049770.9"/>
    <property type="gene ID" value="ENSMUSG00000046994.10"/>
</dbReference>
<dbReference type="GeneID" id="212679"/>
<dbReference type="KEGG" id="mmu:212679"/>
<dbReference type="UCSC" id="uc007baj.1">
    <property type="organism name" value="mouse"/>
</dbReference>
<dbReference type="AGR" id="MGI:2444136"/>
<dbReference type="CTD" id="92935"/>
<dbReference type="MGI" id="MGI:2444136">
    <property type="gene designation" value="Mars2"/>
</dbReference>
<dbReference type="VEuPathDB" id="HostDB:ENSMUSG00000046994"/>
<dbReference type="eggNOG" id="KOG0436">
    <property type="taxonomic scope" value="Eukaryota"/>
</dbReference>
<dbReference type="GeneTree" id="ENSGT00550000075136"/>
<dbReference type="HOGENOM" id="CLU_009710_9_0_1"/>
<dbReference type="InParanoid" id="Q499X9"/>
<dbReference type="OMA" id="NMFLPDR"/>
<dbReference type="OrthoDB" id="5844513at2759"/>
<dbReference type="PhylomeDB" id="Q499X9"/>
<dbReference type="TreeFam" id="TF105709"/>
<dbReference type="BioGRID-ORCS" id="212679">
    <property type="hits" value="28 hits in 79 CRISPR screens"/>
</dbReference>
<dbReference type="ChiTaRS" id="Mars2">
    <property type="organism name" value="mouse"/>
</dbReference>
<dbReference type="PRO" id="PR:Q499X9"/>
<dbReference type="Proteomes" id="UP000000589">
    <property type="component" value="Chromosome 1"/>
</dbReference>
<dbReference type="RNAct" id="Q499X9">
    <property type="molecule type" value="protein"/>
</dbReference>
<dbReference type="Bgee" id="ENSMUSG00000046994">
    <property type="expression patterns" value="Expressed in spermatocyte and 128 other cell types or tissues"/>
</dbReference>
<dbReference type="ExpressionAtlas" id="Q499X9">
    <property type="expression patterns" value="baseline and differential"/>
</dbReference>
<dbReference type="GO" id="GO:0005759">
    <property type="term" value="C:mitochondrial matrix"/>
    <property type="evidence" value="ECO:0007669"/>
    <property type="project" value="UniProtKB-SubCell"/>
</dbReference>
<dbReference type="GO" id="GO:0005739">
    <property type="term" value="C:mitochondrion"/>
    <property type="evidence" value="ECO:0007005"/>
    <property type="project" value="MGI"/>
</dbReference>
<dbReference type="GO" id="GO:0005524">
    <property type="term" value="F:ATP binding"/>
    <property type="evidence" value="ECO:0007669"/>
    <property type="project" value="UniProtKB-KW"/>
</dbReference>
<dbReference type="GO" id="GO:0004825">
    <property type="term" value="F:methionine-tRNA ligase activity"/>
    <property type="evidence" value="ECO:0007669"/>
    <property type="project" value="UniProtKB-EC"/>
</dbReference>
<dbReference type="GO" id="GO:0006431">
    <property type="term" value="P:methionyl-tRNA aminoacylation"/>
    <property type="evidence" value="ECO:0007669"/>
    <property type="project" value="Ensembl"/>
</dbReference>
<dbReference type="CDD" id="cd07957">
    <property type="entry name" value="Anticodon_Ia_Met"/>
    <property type="match status" value="1"/>
</dbReference>
<dbReference type="CDD" id="cd00814">
    <property type="entry name" value="MetRS_core"/>
    <property type="match status" value="1"/>
</dbReference>
<dbReference type="FunFam" id="2.170.220.10:FF:000001">
    <property type="entry name" value="methionine--tRNA ligase, mitochondrial"/>
    <property type="match status" value="1"/>
</dbReference>
<dbReference type="FunFam" id="1.10.730.10:FF:000022">
    <property type="entry name" value="Methionyl-tRNA synthetase 2, mitochondrial"/>
    <property type="match status" value="1"/>
</dbReference>
<dbReference type="Gene3D" id="2.170.220.10">
    <property type="match status" value="1"/>
</dbReference>
<dbReference type="Gene3D" id="3.40.50.620">
    <property type="entry name" value="HUPs"/>
    <property type="match status" value="1"/>
</dbReference>
<dbReference type="Gene3D" id="1.10.730.10">
    <property type="entry name" value="Isoleucyl-tRNA Synthetase, Domain 1"/>
    <property type="match status" value="1"/>
</dbReference>
<dbReference type="InterPro" id="IPR041872">
    <property type="entry name" value="Anticodon_Met"/>
</dbReference>
<dbReference type="InterPro" id="IPR014758">
    <property type="entry name" value="Met-tRNA_synth"/>
</dbReference>
<dbReference type="InterPro" id="IPR023457">
    <property type="entry name" value="Met-tRNA_synth_2"/>
</dbReference>
<dbReference type="InterPro" id="IPR015413">
    <property type="entry name" value="Methionyl/Leucyl_tRNA_Synth"/>
</dbReference>
<dbReference type="InterPro" id="IPR033911">
    <property type="entry name" value="MetRS_core"/>
</dbReference>
<dbReference type="InterPro" id="IPR014729">
    <property type="entry name" value="Rossmann-like_a/b/a_fold"/>
</dbReference>
<dbReference type="InterPro" id="IPR009080">
    <property type="entry name" value="tRNAsynth_Ia_anticodon-bd"/>
</dbReference>
<dbReference type="NCBIfam" id="TIGR00398">
    <property type="entry name" value="metG"/>
    <property type="match status" value="1"/>
</dbReference>
<dbReference type="PANTHER" id="PTHR43326:SF1">
    <property type="entry name" value="METHIONINE--TRNA LIGASE, MITOCHONDRIAL"/>
    <property type="match status" value="1"/>
</dbReference>
<dbReference type="PANTHER" id="PTHR43326">
    <property type="entry name" value="METHIONYL-TRNA SYNTHETASE"/>
    <property type="match status" value="1"/>
</dbReference>
<dbReference type="Pfam" id="PF19303">
    <property type="entry name" value="Anticodon_3"/>
    <property type="match status" value="1"/>
</dbReference>
<dbReference type="Pfam" id="PF09334">
    <property type="entry name" value="tRNA-synt_1g"/>
    <property type="match status" value="1"/>
</dbReference>
<dbReference type="PRINTS" id="PR01041">
    <property type="entry name" value="TRNASYNTHMET"/>
</dbReference>
<dbReference type="SUPFAM" id="SSF47323">
    <property type="entry name" value="Anticodon-binding domain of a subclass of class I aminoacyl-tRNA synthetases"/>
    <property type="match status" value="1"/>
</dbReference>
<dbReference type="SUPFAM" id="SSF52374">
    <property type="entry name" value="Nucleotidylyl transferase"/>
    <property type="match status" value="1"/>
</dbReference>
<accession>Q499X9</accession>
<accession>Q3T9W7</accession>
<accession>Q8BWR9</accession>
<accession>Q8BXY1</accession>